<comment type="function">
    <text evidence="1">Catalyzes the cleavage of L-kynurenine (L-Kyn) and L-3-hydroxykynurenine (L-3OHKyn) into anthranilic acid (AA) and 3-hydroxyanthranilic acid (3-OHAA), respectively.</text>
</comment>
<comment type="catalytic activity">
    <reaction evidence="1">
        <text>L-kynurenine + H2O = anthranilate + L-alanine + H(+)</text>
        <dbReference type="Rhea" id="RHEA:16813"/>
        <dbReference type="ChEBI" id="CHEBI:15377"/>
        <dbReference type="ChEBI" id="CHEBI:15378"/>
        <dbReference type="ChEBI" id="CHEBI:16567"/>
        <dbReference type="ChEBI" id="CHEBI:57959"/>
        <dbReference type="ChEBI" id="CHEBI:57972"/>
        <dbReference type="EC" id="3.7.1.3"/>
    </reaction>
</comment>
<comment type="catalytic activity">
    <reaction evidence="1">
        <text>3-hydroxy-L-kynurenine + H2O = 3-hydroxyanthranilate + L-alanine + H(+)</text>
        <dbReference type="Rhea" id="RHEA:25143"/>
        <dbReference type="ChEBI" id="CHEBI:15377"/>
        <dbReference type="ChEBI" id="CHEBI:15378"/>
        <dbReference type="ChEBI" id="CHEBI:36559"/>
        <dbReference type="ChEBI" id="CHEBI:57972"/>
        <dbReference type="ChEBI" id="CHEBI:58125"/>
        <dbReference type="EC" id="3.7.1.3"/>
    </reaction>
</comment>
<comment type="cofactor">
    <cofactor evidence="1">
        <name>pyridoxal 5'-phosphate</name>
        <dbReference type="ChEBI" id="CHEBI:597326"/>
    </cofactor>
</comment>
<comment type="pathway">
    <text evidence="1">Amino-acid degradation; L-kynurenine degradation; L-alanine and anthranilate from L-kynurenine: step 1/1.</text>
</comment>
<comment type="pathway">
    <text evidence="1">Cofactor biosynthesis; NAD(+) biosynthesis; quinolinate from L-kynurenine: step 2/3.</text>
</comment>
<comment type="subunit">
    <text evidence="1">Homodimer.</text>
</comment>
<comment type="subcellular location">
    <subcellularLocation>
        <location evidence="1">Cytoplasm</location>
    </subcellularLocation>
</comment>
<comment type="similarity">
    <text evidence="1">Belongs to the kynureninase family.</text>
</comment>
<sequence length="453" mass="51144">MSNDLPTKKDLVKWDQEDALNWTRGEYEIPNSKACGGEADGKAIYFCGNSLGLLNKKARQHIMEELDVWSTSSVTGHFNHPYQRPWKHVDEPLTPHLAKLVGAREEEVAHTSTLTSNMHNLFTSFYQPTEKRWKIVIEKGSFPSDWYAVHSHPRLHDKVLRPEQIDNAIIALVPREGEDTLRTEDILKVLDDNKDSIAIVWLPLVQYYTGQLFDISSISPKVHEIGALLGLDMAHGIGNVECKLNEWNVDFAVWCTYKYLNAGPAAIGGFYIRSGLEDGGRRLAGWWGNDARTRFHMSPNFQPTPGAKGYQHSCTPVFSSIPLLATLQLIEAVGFSNMVEKARRLTGTLEALLKASRYHVHPADPKGKIGFKIITPAAPYRGTQLSLVILPEEEHVMPKVFDRMLRKGLVGDERKPSVIRLSPVVLYNTFEEVGRAVEIVEEALEEEEEERKR</sequence>
<dbReference type="EC" id="3.7.1.3" evidence="1"/>
<dbReference type="EMBL" id="AE017343">
    <property type="protein sequence ID" value="AAW42325.1"/>
    <property type="molecule type" value="Genomic_DNA"/>
</dbReference>
<dbReference type="RefSeq" id="XP_569632.1">
    <property type="nucleotide sequence ID" value="XM_569632.1"/>
</dbReference>
<dbReference type="SMR" id="P0CO52"/>
<dbReference type="STRING" id="214684.P0CO52"/>
<dbReference type="PaxDb" id="214684-P0CO52"/>
<dbReference type="EnsemblFungi" id="AAW42325">
    <property type="protein sequence ID" value="AAW42325"/>
    <property type="gene ID" value="CNC03980"/>
</dbReference>
<dbReference type="GeneID" id="3256628"/>
<dbReference type="KEGG" id="cne:CNC03980"/>
<dbReference type="VEuPathDB" id="FungiDB:CNC03980"/>
<dbReference type="eggNOG" id="KOG3846">
    <property type="taxonomic scope" value="Eukaryota"/>
</dbReference>
<dbReference type="HOGENOM" id="CLU_003433_4_0_1"/>
<dbReference type="InParanoid" id="P0CO52"/>
<dbReference type="OMA" id="SHVAYRS"/>
<dbReference type="OrthoDB" id="5978656at2759"/>
<dbReference type="UniPathway" id="UPA00253">
    <property type="reaction ID" value="UER00329"/>
</dbReference>
<dbReference type="UniPathway" id="UPA00334">
    <property type="reaction ID" value="UER00455"/>
</dbReference>
<dbReference type="Proteomes" id="UP000002149">
    <property type="component" value="Chromosome 3"/>
</dbReference>
<dbReference type="GO" id="GO:0005737">
    <property type="term" value="C:cytoplasm"/>
    <property type="evidence" value="ECO:0000318"/>
    <property type="project" value="GO_Central"/>
</dbReference>
<dbReference type="GO" id="GO:0030429">
    <property type="term" value="F:kynureninase activity"/>
    <property type="evidence" value="ECO:0000318"/>
    <property type="project" value="GO_Central"/>
</dbReference>
<dbReference type="GO" id="GO:0030170">
    <property type="term" value="F:pyridoxal phosphate binding"/>
    <property type="evidence" value="ECO:0007669"/>
    <property type="project" value="UniProtKB-UniRule"/>
</dbReference>
<dbReference type="GO" id="GO:0034354">
    <property type="term" value="P:'de novo' NAD biosynthetic process from L-tryptophan"/>
    <property type="evidence" value="ECO:0007669"/>
    <property type="project" value="UniProtKB-UniRule"/>
</dbReference>
<dbReference type="GO" id="GO:0043420">
    <property type="term" value="P:anthranilate metabolic process"/>
    <property type="evidence" value="ECO:0000318"/>
    <property type="project" value="GO_Central"/>
</dbReference>
<dbReference type="GO" id="GO:0097053">
    <property type="term" value="P:L-kynurenine catabolic process"/>
    <property type="evidence" value="ECO:0007669"/>
    <property type="project" value="UniProtKB-UniRule"/>
</dbReference>
<dbReference type="GO" id="GO:0019441">
    <property type="term" value="P:L-tryptophan catabolic process to kynurenine"/>
    <property type="evidence" value="ECO:0000318"/>
    <property type="project" value="GO_Central"/>
</dbReference>
<dbReference type="GO" id="GO:0019805">
    <property type="term" value="P:quinolinate biosynthetic process"/>
    <property type="evidence" value="ECO:0007669"/>
    <property type="project" value="UniProtKB-UniRule"/>
</dbReference>
<dbReference type="FunFam" id="3.40.640.10:FF:000031">
    <property type="entry name" value="Kynureninase"/>
    <property type="match status" value="1"/>
</dbReference>
<dbReference type="Gene3D" id="3.90.1150.10">
    <property type="entry name" value="Aspartate Aminotransferase, domain 1"/>
    <property type="match status" value="1"/>
</dbReference>
<dbReference type="Gene3D" id="3.40.640.10">
    <property type="entry name" value="Type I PLP-dependent aspartate aminotransferase-like (Major domain)"/>
    <property type="match status" value="1"/>
</dbReference>
<dbReference type="HAMAP" id="MF_01970">
    <property type="entry name" value="Kynureninase"/>
    <property type="match status" value="1"/>
</dbReference>
<dbReference type="InterPro" id="IPR000192">
    <property type="entry name" value="Aminotrans_V_dom"/>
</dbReference>
<dbReference type="InterPro" id="IPR010111">
    <property type="entry name" value="Kynureninase"/>
</dbReference>
<dbReference type="InterPro" id="IPR015424">
    <property type="entry name" value="PyrdxlP-dep_Trfase"/>
</dbReference>
<dbReference type="InterPro" id="IPR015421">
    <property type="entry name" value="PyrdxlP-dep_Trfase_major"/>
</dbReference>
<dbReference type="InterPro" id="IPR015422">
    <property type="entry name" value="PyrdxlP-dep_Trfase_small"/>
</dbReference>
<dbReference type="NCBIfam" id="TIGR01814">
    <property type="entry name" value="kynureninase"/>
    <property type="match status" value="1"/>
</dbReference>
<dbReference type="PANTHER" id="PTHR14084">
    <property type="entry name" value="KYNURENINASE"/>
    <property type="match status" value="1"/>
</dbReference>
<dbReference type="PANTHER" id="PTHR14084:SF0">
    <property type="entry name" value="KYNURENINASE"/>
    <property type="match status" value="1"/>
</dbReference>
<dbReference type="Pfam" id="PF00266">
    <property type="entry name" value="Aminotran_5"/>
    <property type="match status" value="1"/>
</dbReference>
<dbReference type="Pfam" id="PF22580">
    <property type="entry name" value="KYNU_C"/>
    <property type="match status" value="1"/>
</dbReference>
<dbReference type="PIRSF" id="PIRSF038800">
    <property type="entry name" value="KYNU"/>
    <property type="match status" value="1"/>
</dbReference>
<dbReference type="SUPFAM" id="SSF53383">
    <property type="entry name" value="PLP-dependent transferases"/>
    <property type="match status" value="1"/>
</dbReference>
<keyword id="KW-0963">Cytoplasm</keyword>
<keyword id="KW-0378">Hydrolase</keyword>
<keyword id="KW-0662">Pyridine nucleotide biosynthesis</keyword>
<keyword id="KW-0663">Pyridoxal phosphate</keyword>
<keyword id="KW-1185">Reference proteome</keyword>
<accession>P0CO52</accession>
<accession>Q55W17</accession>
<accession>Q5KK77</accession>
<feature type="chain" id="PRO_0000356976" description="Kynureninase">
    <location>
        <begin position="1"/>
        <end position="453"/>
    </location>
</feature>
<feature type="binding site" evidence="1">
    <location>
        <position position="114"/>
    </location>
    <ligand>
        <name>pyridoxal 5'-phosphate</name>
        <dbReference type="ChEBI" id="CHEBI:597326"/>
    </ligand>
</feature>
<feature type="binding site" evidence="1">
    <location>
        <position position="115"/>
    </location>
    <ligand>
        <name>pyridoxal 5'-phosphate</name>
        <dbReference type="ChEBI" id="CHEBI:597326"/>
    </ligand>
</feature>
<feature type="binding site" evidence="1">
    <location>
        <begin position="142"/>
        <end position="145"/>
    </location>
    <ligand>
        <name>pyridoxal 5'-phosphate</name>
        <dbReference type="ChEBI" id="CHEBI:597326"/>
    </ligand>
</feature>
<feature type="binding site" evidence="1">
    <location>
        <position position="232"/>
    </location>
    <ligand>
        <name>pyridoxal 5'-phosphate</name>
        <dbReference type="ChEBI" id="CHEBI:597326"/>
    </ligand>
</feature>
<feature type="binding site" evidence="1">
    <location>
        <position position="235"/>
    </location>
    <ligand>
        <name>pyridoxal 5'-phosphate</name>
        <dbReference type="ChEBI" id="CHEBI:597326"/>
    </ligand>
</feature>
<feature type="binding site" evidence="1">
    <location>
        <position position="257"/>
    </location>
    <ligand>
        <name>pyridoxal 5'-phosphate</name>
        <dbReference type="ChEBI" id="CHEBI:597326"/>
    </ligand>
</feature>
<feature type="binding site" evidence="1">
    <location>
        <position position="286"/>
    </location>
    <ligand>
        <name>pyridoxal 5'-phosphate</name>
        <dbReference type="ChEBI" id="CHEBI:597326"/>
    </ligand>
</feature>
<feature type="modified residue" description="N6-(pyridoxal phosphate)lysine" evidence="1">
    <location>
        <position position="258"/>
    </location>
</feature>
<name>KYNU_CRYNJ</name>
<gene>
    <name evidence="1" type="primary">BNA5</name>
    <name type="ordered locus">CNC03980</name>
</gene>
<evidence type="ECO:0000255" key="1">
    <source>
        <dbReference type="HAMAP-Rule" id="MF_03017"/>
    </source>
</evidence>
<proteinExistence type="inferred from homology"/>
<organism>
    <name type="scientific">Cryptococcus neoformans var. neoformans serotype D (strain JEC21 / ATCC MYA-565)</name>
    <name type="common">Filobasidiella neoformans</name>
    <dbReference type="NCBI Taxonomy" id="214684"/>
    <lineage>
        <taxon>Eukaryota</taxon>
        <taxon>Fungi</taxon>
        <taxon>Dikarya</taxon>
        <taxon>Basidiomycota</taxon>
        <taxon>Agaricomycotina</taxon>
        <taxon>Tremellomycetes</taxon>
        <taxon>Tremellales</taxon>
        <taxon>Cryptococcaceae</taxon>
        <taxon>Cryptococcus</taxon>
        <taxon>Cryptococcus neoformans species complex</taxon>
    </lineage>
</organism>
<protein>
    <recommendedName>
        <fullName evidence="1">Kynureninase</fullName>
        <ecNumber evidence="1">3.7.1.3</ecNumber>
    </recommendedName>
    <alternativeName>
        <fullName evidence="1">Biosynthesis of nicotinic acid protein 5</fullName>
    </alternativeName>
    <alternativeName>
        <fullName evidence="1">L-kynurenine hydrolase</fullName>
    </alternativeName>
</protein>
<reference key="1">
    <citation type="journal article" date="2005" name="Science">
        <title>The genome of the basidiomycetous yeast and human pathogen Cryptococcus neoformans.</title>
        <authorList>
            <person name="Loftus B.J."/>
            <person name="Fung E."/>
            <person name="Roncaglia P."/>
            <person name="Rowley D."/>
            <person name="Amedeo P."/>
            <person name="Bruno D."/>
            <person name="Vamathevan J."/>
            <person name="Miranda M."/>
            <person name="Anderson I.J."/>
            <person name="Fraser J.A."/>
            <person name="Allen J.E."/>
            <person name="Bosdet I.E."/>
            <person name="Brent M.R."/>
            <person name="Chiu R."/>
            <person name="Doering T.L."/>
            <person name="Donlin M.J."/>
            <person name="D'Souza C.A."/>
            <person name="Fox D.S."/>
            <person name="Grinberg V."/>
            <person name="Fu J."/>
            <person name="Fukushima M."/>
            <person name="Haas B.J."/>
            <person name="Huang J.C."/>
            <person name="Janbon G."/>
            <person name="Jones S.J.M."/>
            <person name="Koo H.L."/>
            <person name="Krzywinski M.I."/>
            <person name="Kwon-Chung K.J."/>
            <person name="Lengeler K.B."/>
            <person name="Maiti R."/>
            <person name="Marra M.A."/>
            <person name="Marra R.E."/>
            <person name="Mathewson C.A."/>
            <person name="Mitchell T.G."/>
            <person name="Pertea M."/>
            <person name="Riggs F.R."/>
            <person name="Salzberg S.L."/>
            <person name="Schein J.E."/>
            <person name="Shvartsbeyn A."/>
            <person name="Shin H."/>
            <person name="Shumway M."/>
            <person name="Specht C.A."/>
            <person name="Suh B.B."/>
            <person name="Tenney A."/>
            <person name="Utterback T.R."/>
            <person name="Wickes B.L."/>
            <person name="Wortman J.R."/>
            <person name="Wye N.H."/>
            <person name="Kronstad J.W."/>
            <person name="Lodge J.K."/>
            <person name="Heitman J."/>
            <person name="Davis R.W."/>
            <person name="Fraser C.M."/>
            <person name="Hyman R.W."/>
        </authorList>
    </citation>
    <scope>NUCLEOTIDE SEQUENCE [LARGE SCALE GENOMIC DNA]</scope>
    <source>
        <strain>JEC21 / ATCC MYA-565</strain>
    </source>
</reference>